<feature type="chain" id="PRO_0000117813" description="NADH-ubiquinone oxidoreductase chain 3">
    <location>
        <begin position="1"/>
        <end position="115"/>
    </location>
</feature>
<feature type="transmembrane region" description="Helical" evidence="3">
    <location>
        <begin position="3"/>
        <end position="23"/>
    </location>
</feature>
<feature type="transmembrane region" description="Helical" evidence="3">
    <location>
        <begin position="55"/>
        <end position="75"/>
    </location>
</feature>
<feature type="transmembrane region" description="Helical" evidence="3">
    <location>
        <begin position="84"/>
        <end position="104"/>
    </location>
</feature>
<feature type="sequence variant" id="VAR_025015">
    <original>V</original>
    <variation>I</variation>
    <location>
        <position position="4"/>
    </location>
</feature>
<geneLocation type="mitochondrion"/>
<comment type="function">
    <text evidence="1">Core subunit of the mitochondrial membrane respiratory chain NADH dehydrogenase (Complex I) which catalyzes electron transfer from NADH through the respiratory chain, using ubiquinone as an electron acceptor. Essential for the catalytic activity of complex I.</text>
</comment>
<comment type="catalytic activity">
    <reaction evidence="1">
        <text>a ubiquinone + NADH + 5 H(+)(in) = a ubiquinol + NAD(+) + 4 H(+)(out)</text>
        <dbReference type="Rhea" id="RHEA:29091"/>
        <dbReference type="Rhea" id="RHEA-COMP:9565"/>
        <dbReference type="Rhea" id="RHEA-COMP:9566"/>
        <dbReference type="ChEBI" id="CHEBI:15378"/>
        <dbReference type="ChEBI" id="CHEBI:16389"/>
        <dbReference type="ChEBI" id="CHEBI:17976"/>
        <dbReference type="ChEBI" id="CHEBI:57540"/>
        <dbReference type="ChEBI" id="CHEBI:57945"/>
        <dbReference type="EC" id="7.1.1.2"/>
    </reaction>
</comment>
<comment type="subunit">
    <text evidence="1">Core subunit of respiratory chain NADH dehydrogenase (Complex I) which is composed of 45 different subunits. Interacts with TMEM186. Interacts with TMEM242 (By similarity).</text>
</comment>
<comment type="subcellular location">
    <subcellularLocation>
        <location evidence="2">Mitochondrion inner membrane</location>
        <topology evidence="3">Multi-pass membrane protein</topology>
    </subcellularLocation>
</comment>
<comment type="similarity">
    <text evidence="4">Belongs to the complex I subunit 3 family.</text>
</comment>
<dbReference type="EC" id="7.1.1.2" evidence="1"/>
<dbReference type="EMBL" id="D38115">
    <property type="protein sequence ID" value="BAA85290.1"/>
    <property type="molecule type" value="Genomic_DNA"/>
</dbReference>
<dbReference type="EMBL" id="AF273443">
    <property type="protein sequence ID" value="AAG28034.1"/>
    <property type="molecule type" value="Genomic_DNA"/>
</dbReference>
<dbReference type="EMBL" id="AY764935">
    <property type="protein sequence ID" value="AAV34895.1"/>
    <property type="molecule type" value="Genomic_DNA"/>
</dbReference>
<dbReference type="EMBL" id="AY764936">
    <property type="protein sequence ID" value="AAV34896.1"/>
    <property type="molecule type" value="Genomic_DNA"/>
</dbReference>
<dbReference type="EMBL" id="AY764937">
    <property type="protein sequence ID" value="AAV34897.1"/>
    <property type="molecule type" value="Genomic_DNA"/>
</dbReference>
<dbReference type="EMBL" id="AY764938">
    <property type="protein sequence ID" value="AAV34898.1"/>
    <property type="molecule type" value="Genomic_DNA"/>
</dbReference>
<dbReference type="EMBL" id="AY764939">
    <property type="protein sequence ID" value="AAV34899.1"/>
    <property type="molecule type" value="Genomic_DNA"/>
</dbReference>
<dbReference type="EMBL" id="AY764940">
    <property type="protein sequence ID" value="AAV34900.1"/>
    <property type="molecule type" value="Genomic_DNA"/>
</dbReference>
<dbReference type="EMBL" id="AY764946">
    <property type="protein sequence ID" value="AAV34906.1"/>
    <property type="molecule type" value="Genomic_DNA"/>
</dbReference>
<dbReference type="EMBL" id="AY764948">
    <property type="protein sequence ID" value="AAV34908.1"/>
    <property type="molecule type" value="Genomic_DNA"/>
</dbReference>
<dbReference type="EMBL" id="AY764951">
    <property type="protein sequence ID" value="AAV34911.1"/>
    <property type="molecule type" value="Genomic_DNA"/>
</dbReference>
<dbReference type="EMBL" id="AY764952">
    <property type="protein sequence ID" value="AAV34912.1"/>
    <property type="molecule type" value="Genomic_DNA"/>
</dbReference>
<dbReference type="EMBL" id="AY764953">
    <property type="protein sequence ID" value="AAV34913.1"/>
    <property type="molecule type" value="Genomic_DNA"/>
</dbReference>
<dbReference type="EMBL" id="AY764954">
    <property type="protein sequence ID" value="AAV34914.1"/>
    <property type="molecule type" value="Genomic_DNA"/>
</dbReference>
<dbReference type="EMBL" id="AY764955">
    <property type="protein sequence ID" value="AAV34915.1"/>
    <property type="molecule type" value="Genomic_DNA"/>
</dbReference>
<dbReference type="EMBL" id="AY764956">
    <property type="protein sequence ID" value="AAV34916.1"/>
    <property type="molecule type" value="Genomic_DNA"/>
</dbReference>
<dbReference type="EMBL" id="AY764957">
    <property type="protein sequence ID" value="AAV34917.1"/>
    <property type="molecule type" value="Genomic_DNA"/>
</dbReference>
<dbReference type="EMBL" id="AY764958">
    <property type="protein sequence ID" value="AAV34918.1"/>
    <property type="molecule type" value="Genomic_DNA"/>
</dbReference>
<dbReference type="EMBL" id="AY764963">
    <property type="protein sequence ID" value="AAV34923.1"/>
    <property type="molecule type" value="Genomic_DNA"/>
</dbReference>
<dbReference type="EMBL" id="AY764964">
    <property type="protein sequence ID" value="AAV34924.1"/>
    <property type="molecule type" value="Genomic_DNA"/>
</dbReference>
<dbReference type="EMBL" id="AY764965">
    <property type="protein sequence ID" value="AAV34925.1"/>
    <property type="molecule type" value="Genomic_DNA"/>
</dbReference>
<dbReference type="EMBL" id="AY764966">
    <property type="protein sequence ID" value="AAV34926.1"/>
    <property type="molecule type" value="Genomic_DNA"/>
</dbReference>
<dbReference type="EMBL" id="AY764967">
    <property type="protein sequence ID" value="AAV34927.1"/>
    <property type="molecule type" value="Genomic_DNA"/>
</dbReference>
<dbReference type="EMBL" id="AY764968">
    <property type="protein sequence ID" value="AAV34928.1"/>
    <property type="molecule type" value="Genomic_DNA"/>
</dbReference>
<dbReference type="EMBL" id="AY764969">
    <property type="protein sequence ID" value="AAV34929.1"/>
    <property type="molecule type" value="Genomic_DNA"/>
</dbReference>
<dbReference type="EMBL" id="AY764971">
    <property type="protein sequence ID" value="AAV34931.1"/>
    <property type="molecule type" value="Genomic_DNA"/>
</dbReference>
<dbReference type="EMBL" id="AY764972">
    <property type="protein sequence ID" value="AAV34932.1"/>
    <property type="molecule type" value="Genomic_DNA"/>
</dbReference>
<dbReference type="EMBL" id="AY764973">
    <property type="protein sequence ID" value="AAV34933.1"/>
    <property type="molecule type" value="Genomic_DNA"/>
</dbReference>
<dbReference type="EMBL" id="AY764974">
    <property type="protein sequence ID" value="AAV34934.1"/>
    <property type="molecule type" value="Genomic_DNA"/>
</dbReference>
<dbReference type="EMBL" id="AY764975">
    <property type="protein sequence ID" value="AAV34935.1"/>
    <property type="molecule type" value="Genomic_DNA"/>
</dbReference>
<dbReference type="EMBL" id="AY764976">
    <property type="protein sequence ID" value="AAV34936.1"/>
    <property type="molecule type" value="Genomic_DNA"/>
</dbReference>
<dbReference type="EMBL" id="AY764977">
    <property type="protein sequence ID" value="AAV34937.1"/>
    <property type="molecule type" value="Genomic_DNA"/>
</dbReference>
<dbReference type="EMBL" id="AY764978">
    <property type="protein sequence ID" value="AAV34938.1"/>
    <property type="molecule type" value="Genomic_DNA"/>
</dbReference>
<dbReference type="EMBL" id="AY764979">
    <property type="protein sequence ID" value="AAV34939.1"/>
    <property type="molecule type" value="Genomic_DNA"/>
</dbReference>
<dbReference type="EMBL" id="AY764980">
    <property type="protein sequence ID" value="AAV34940.1"/>
    <property type="molecule type" value="Genomic_DNA"/>
</dbReference>
<dbReference type="EMBL" id="AY764981">
    <property type="protein sequence ID" value="AAV34941.1"/>
    <property type="molecule type" value="Genomic_DNA"/>
</dbReference>
<dbReference type="EMBL" id="AY764982">
    <property type="protein sequence ID" value="AAV34942.1"/>
    <property type="molecule type" value="Genomic_DNA"/>
</dbReference>
<dbReference type="EMBL" id="AY764984">
    <property type="protein sequence ID" value="AAV34944.1"/>
    <property type="molecule type" value="Genomic_DNA"/>
</dbReference>
<dbReference type="EMBL" id="AY764985">
    <property type="protein sequence ID" value="AAV34945.1"/>
    <property type="molecule type" value="Genomic_DNA"/>
</dbReference>
<dbReference type="EMBL" id="AY764986">
    <property type="protein sequence ID" value="AAV34946.1"/>
    <property type="molecule type" value="Genomic_DNA"/>
</dbReference>
<dbReference type="EMBL" id="AY764987">
    <property type="protein sequence ID" value="AAV34947.1"/>
    <property type="molecule type" value="Genomic_DNA"/>
</dbReference>
<dbReference type="EMBL" id="AY764988">
    <property type="protein sequence ID" value="AAV34948.1"/>
    <property type="molecule type" value="Genomic_DNA"/>
</dbReference>
<dbReference type="EMBL" id="AY764990">
    <property type="protein sequence ID" value="AAV34950.1"/>
    <property type="molecule type" value="Genomic_DNA"/>
</dbReference>
<dbReference type="EMBL" id="AY764989">
    <property type="protein sequence ID" value="AAV34949.1"/>
    <property type="molecule type" value="Genomic_DNA"/>
</dbReference>
<dbReference type="EMBL" id="AY764991">
    <property type="protein sequence ID" value="AAV34951.1"/>
    <property type="molecule type" value="Genomic_DNA"/>
</dbReference>
<dbReference type="RefSeq" id="NP_008232.1">
    <property type="nucleotide sequence ID" value="NC_001646.1"/>
</dbReference>
<dbReference type="SMR" id="Q9T9X5"/>
<dbReference type="GeneID" id="807902"/>
<dbReference type="KEGG" id="ppyg:807902"/>
<dbReference type="CTD" id="4537"/>
<dbReference type="GO" id="GO:0005743">
    <property type="term" value="C:mitochondrial inner membrane"/>
    <property type="evidence" value="ECO:0000250"/>
    <property type="project" value="UniProtKB"/>
</dbReference>
<dbReference type="GO" id="GO:0030964">
    <property type="term" value="C:NADH dehydrogenase complex"/>
    <property type="evidence" value="ECO:0007669"/>
    <property type="project" value="TreeGrafter"/>
</dbReference>
<dbReference type="GO" id="GO:0008137">
    <property type="term" value="F:NADH dehydrogenase (ubiquinone) activity"/>
    <property type="evidence" value="ECO:0000250"/>
    <property type="project" value="UniProtKB"/>
</dbReference>
<dbReference type="GO" id="GO:0006120">
    <property type="term" value="P:mitochondrial electron transport, NADH to ubiquinone"/>
    <property type="evidence" value="ECO:0000250"/>
    <property type="project" value="UniProtKB"/>
</dbReference>
<dbReference type="FunFam" id="1.20.58.1610:FF:000004">
    <property type="entry name" value="NADH-quinone oxidoreductase subunit A"/>
    <property type="match status" value="1"/>
</dbReference>
<dbReference type="Gene3D" id="1.20.58.1610">
    <property type="entry name" value="NADH:ubiquinone/plastoquinone oxidoreductase, chain 3"/>
    <property type="match status" value="1"/>
</dbReference>
<dbReference type="InterPro" id="IPR000440">
    <property type="entry name" value="NADH_UbQ/plastoQ_OxRdtase_su3"/>
</dbReference>
<dbReference type="InterPro" id="IPR038430">
    <property type="entry name" value="NDAH_ubi_oxred_su3_sf"/>
</dbReference>
<dbReference type="PANTHER" id="PTHR11058">
    <property type="entry name" value="NADH-UBIQUINONE OXIDOREDUCTASE CHAIN 3"/>
    <property type="match status" value="1"/>
</dbReference>
<dbReference type="PANTHER" id="PTHR11058:SF9">
    <property type="entry name" value="NADH-UBIQUINONE OXIDOREDUCTASE CHAIN 3"/>
    <property type="match status" value="1"/>
</dbReference>
<dbReference type="Pfam" id="PF00507">
    <property type="entry name" value="Oxidored_q4"/>
    <property type="match status" value="1"/>
</dbReference>
<reference key="1">
    <citation type="journal article" date="1995" name="Proc. Natl. Acad. Sci. U.S.A.">
        <title>Recent African origin of modern humans revealed by complete sequences of hominoid mitochondrial DNAs.</title>
        <authorList>
            <person name="Horai S."/>
            <person name="Hayasaka K."/>
            <person name="Kondo R."/>
            <person name="Tsugane K."/>
            <person name="Takahata N."/>
        </authorList>
    </citation>
    <scope>NUCLEOTIDE SEQUENCE [GENOMIC DNA]</scope>
</reference>
<reference key="2">
    <citation type="journal article" date="2000" name="J. Mol. Evol.">
        <title>mtDNA sequence diversity of orangutans from the islands of Borneo and Sumatra.</title>
        <authorList>
            <person name="Muir C.C."/>
            <person name="Galdikas B.M.F."/>
            <person name="Beckenbach A.T."/>
        </authorList>
    </citation>
    <scope>NUCLEOTIDE SEQUENCE [GENOMIC DNA]</scope>
</reference>
<reference key="3">
    <citation type="submission" date="2004-09" db="EMBL/GenBank/DDBJ databases">
        <title>Pongo pygmaeus population study.</title>
        <authorList>
            <person name="Kanthaswamy S."/>
            <person name="Kurushima J."/>
            <person name="Alminas O."/>
            <person name="Von Dollen A."/>
        </authorList>
    </citation>
    <scope>NUCLEOTIDE SEQUENCE [GENOMIC DNA]</scope>
</reference>
<proteinExistence type="inferred from homology"/>
<accession>Q9T9X5</accession>
<accession>Q5UBR6</accession>
<evidence type="ECO:0000250" key="1">
    <source>
        <dbReference type="UniProtKB" id="P03897"/>
    </source>
</evidence>
<evidence type="ECO:0000250" key="2">
    <source>
        <dbReference type="UniProtKB" id="P03898"/>
    </source>
</evidence>
<evidence type="ECO:0000255" key="3"/>
<evidence type="ECO:0000305" key="4"/>
<organism>
    <name type="scientific">Pongo pygmaeus</name>
    <name type="common">Bornean orangutan</name>
    <dbReference type="NCBI Taxonomy" id="9600"/>
    <lineage>
        <taxon>Eukaryota</taxon>
        <taxon>Metazoa</taxon>
        <taxon>Chordata</taxon>
        <taxon>Craniata</taxon>
        <taxon>Vertebrata</taxon>
        <taxon>Euteleostomi</taxon>
        <taxon>Mammalia</taxon>
        <taxon>Eutheria</taxon>
        <taxon>Euarchontoglires</taxon>
        <taxon>Primates</taxon>
        <taxon>Haplorrhini</taxon>
        <taxon>Catarrhini</taxon>
        <taxon>Hominidae</taxon>
        <taxon>Pongo</taxon>
    </lineage>
</organism>
<gene>
    <name evidence="1" type="primary">MT-ND3</name>
    <name type="synonym">MTND3</name>
    <name type="synonym">NADH3</name>
    <name type="synonym">ND3</name>
</gene>
<name>NU3M_PONPY</name>
<keyword id="KW-0249">Electron transport</keyword>
<keyword id="KW-0472">Membrane</keyword>
<keyword id="KW-0496">Mitochondrion</keyword>
<keyword id="KW-0999">Mitochondrion inner membrane</keyword>
<keyword id="KW-0520">NAD</keyword>
<keyword id="KW-0679">Respiratory chain</keyword>
<keyword id="KW-1278">Translocase</keyword>
<keyword id="KW-0812">Transmembrane</keyword>
<keyword id="KW-1133">Transmembrane helix</keyword>
<keyword id="KW-0813">Transport</keyword>
<keyword id="KW-0830">Ubiquinone</keyword>
<protein>
    <recommendedName>
        <fullName evidence="1">NADH-ubiquinone oxidoreductase chain 3</fullName>
        <ecNumber evidence="1">7.1.1.2</ecNumber>
    </recommendedName>
    <alternativeName>
        <fullName>NADH dehydrogenase subunit 3</fullName>
    </alternativeName>
</protein>
<sequence>MNFVLALTINTLLALLLMILTFWLPQLNPYMEKSDPYECGFDPAYPARIPFSMKFFLVAITFLLFDLEIALLLPLPWALQTTNLPLMTTSSLMLIIILALGLTYEWSQKGLDWTE</sequence>